<proteinExistence type="evidence at protein level"/>
<keyword id="KW-1003">Cell membrane</keyword>
<keyword id="KW-0903">Direct protein sequencing</keyword>
<keyword id="KW-0472">Membrane</keyword>
<sequence>AAKPLDKSSSSLHHGYSKVHVP</sequence>
<organism>
    <name type="scientific">Staphylococcus aureus</name>
    <dbReference type="NCBI Taxonomy" id="1280"/>
    <lineage>
        <taxon>Bacteria</taxon>
        <taxon>Bacillati</taxon>
        <taxon>Bacillota</taxon>
        <taxon>Bacilli</taxon>
        <taxon>Bacillales</taxon>
        <taxon>Staphylococcaceae</taxon>
        <taxon>Staphylococcus</taxon>
    </lineage>
</organism>
<accession>P0C6P4</accession>
<accession>P21223</accession>
<accession>Q9K4S8</accession>
<name>OMP7_STAAU</name>
<feature type="chain" id="PRO_0000021893" description="65 kDa membrane protein">
    <location>
        <begin position="1"/>
        <end position="22"/>
    </location>
</feature>
<feature type="region of interest" description="Disordered" evidence="2">
    <location>
        <begin position="1"/>
        <end position="22"/>
    </location>
</feature>
<feature type="non-terminal residue">
    <location>
        <position position="1"/>
    </location>
</feature>
<feature type="non-terminal residue">
    <location>
        <position position="22"/>
    </location>
</feature>
<evidence type="ECO:0000250" key="1"/>
<evidence type="ECO:0000256" key="2">
    <source>
        <dbReference type="SAM" id="MobiDB-lite"/>
    </source>
</evidence>
<reference key="1">
    <citation type="submission" date="1991-03" db="UniProtKB">
        <authorList>
            <person name="Yousif Y."/>
            <person name="Schiltz E."/>
            <person name="Vogt A."/>
        </authorList>
    </citation>
    <scope>PROTEIN SEQUENCE</scope>
    <source>
        <strain>ATCC 25923 / DSM 1104 / JCM 2413 / NBRC 14462 / NCIMB 12702 / NCTC 12981 / Seattle 1945</strain>
    </source>
</reference>
<comment type="function">
    <text evidence="1">Binds various plasma and ECM-proteins.</text>
</comment>
<comment type="subcellular location">
    <subcellularLocation>
        <location evidence="1">Cell membrane</location>
    </subcellularLocation>
</comment>
<dbReference type="GO" id="GO:0005886">
    <property type="term" value="C:plasma membrane"/>
    <property type="evidence" value="ECO:0007669"/>
    <property type="project" value="UniProtKB-SubCell"/>
</dbReference>
<protein>
    <recommendedName>
        <fullName>65 kDa membrane protein</fullName>
    </recommendedName>
    <alternativeName>
        <fullName>map-ND2C</fullName>
    </alternativeName>
</protein>